<sequence length="139" mass="15164">MVERTFSIIKPDAVERNLQGEVLAMIQGAGLKVVAMKMIHLTKAQAEGFYAVHRERPFFDSLTTYMCSGPVVCSVLEGENAISRYREIMGATNPANAAEGTIRKKYAVSLEANSVHGSDAPETAAFEISYFFNALEIVG</sequence>
<gene>
    <name evidence="1" type="primary">ndk</name>
    <name type="ordered locus">Dvul_0925</name>
</gene>
<accession>A1VBY0</accession>
<protein>
    <recommendedName>
        <fullName evidence="1">Nucleoside diphosphate kinase</fullName>
        <shortName evidence="1">NDK</shortName>
        <shortName evidence="1">NDP kinase</shortName>
        <ecNumber evidence="1">2.7.4.6</ecNumber>
    </recommendedName>
    <alternativeName>
        <fullName evidence="1">Nucleoside-2-P kinase</fullName>
    </alternativeName>
</protein>
<name>NDK_NITV4</name>
<organism>
    <name type="scientific">Nitratidesulfovibrio vulgaris (strain DP4)</name>
    <name type="common">Desulfovibrio vulgaris</name>
    <dbReference type="NCBI Taxonomy" id="391774"/>
    <lineage>
        <taxon>Bacteria</taxon>
        <taxon>Pseudomonadati</taxon>
        <taxon>Thermodesulfobacteriota</taxon>
        <taxon>Desulfovibrionia</taxon>
        <taxon>Desulfovibrionales</taxon>
        <taxon>Desulfovibrionaceae</taxon>
        <taxon>Nitratidesulfovibrio</taxon>
    </lineage>
</organism>
<dbReference type="EC" id="2.7.4.6" evidence="1"/>
<dbReference type="EMBL" id="CP000527">
    <property type="protein sequence ID" value="ABM27946.1"/>
    <property type="molecule type" value="Genomic_DNA"/>
</dbReference>
<dbReference type="RefSeq" id="WP_010939606.1">
    <property type="nucleotide sequence ID" value="NC_008751.1"/>
</dbReference>
<dbReference type="SMR" id="A1VBY0"/>
<dbReference type="KEGG" id="dvl:Dvul_0925"/>
<dbReference type="HOGENOM" id="CLU_060216_8_1_7"/>
<dbReference type="Proteomes" id="UP000009173">
    <property type="component" value="Chromosome"/>
</dbReference>
<dbReference type="GO" id="GO:0005737">
    <property type="term" value="C:cytoplasm"/>
    <property type="evidence" value="ECO:0007669"/>
    <property type="project" value="UniProtKB-SubCell"/>
</dbReference>
<dbReference type="GO" id="GO:0005524">
    <property type="term" value="F:ATP binding"/>
    <property type="evidence" value="ECO:0007669"/>
    <property type="project" value="UniProtKB-UniRule"/>
</dbReference>
<dbReference type="GO" id="GO:0046872">
    <property type="term" value="F:metal ion binding"/>
    <property type="evidence" value="ECO:0007669"/>
    <property type="project" value="UniProtKB-KW"/>
</dbReference>
<dbReference type="GO" id="GO:0004550">
    <property type="term" value="F:nucleoside diphosphate kinase activity"/>
    <property type="evidence" value="ECO:0007669"/>
    <property type="project" value="UniProtKB-UniRule"/>
</dbReference>
<dbReference type="GO" id="GO:0006241">
    <property type="term" value="P:CTP biosynthetic process"/>
    <property type="evidence" value="ECO:0007669"/>
    <property type="project" value="UniProtKB-UniRule"/>
</dbReference>
<dbReference type="GO" id="GO:0006183">
    <property type="term" value="P:GTP biosynthetic process"/>
    <property type="evidence" value="ECO:0007669"/>
    <property type="project" value="UniProtKB-UniRule"/>
</dbReference>
<dbReference type="GO" id="GO:0006228">
    <property type="term" value="P:UTP biosynthetic process"/>
    <property type="evidence" value="ECO:0007669"/>
    <property type="project" value="UniProtKB-UniRule"/>
</dbReference>
<dbReference type="CDD" id="cd04413">
    <property type="entry name" value="NDPk_I"/>
    <property type="match status" value="1"/>
</dbReference>
<dbReference type="FunFam" id="3.30.70.141:FF:000001">
    <property type="entry name" value="Nucleoside diphosphate kinase"/>
    <property type="match status" value="1"/>
</dbReference>
<dbReference type="Gene3D" id="3.30.70.141">
    <property type="entry name" value="Nucleoside diphosphate kinase-like domain"/>
    <property type="match status" value="1"/>
</dbReference>
<dbReference type="HAMAP" id="MF_00451">
    <property type="entry name" value="NDP_kinase"/>
    <property type="match status" value="1"/>
</dbReference>
<dbReference type="InterPro" id="IPR034907">
    <property type="entry name" value="NDK-like_dom"/>
</dbReference>
<dbReference type="InterPro" id="IPR036850">
    <property type="entry name" value="NDK-like_dom_sf"/>
</dbReference>
<dbReference type="InterPro" id="IPR001564">
    <property type="entry name" value="Nucleoside_diP_kinase"/>
</dbReference>
<dbReference type="InterPro" id="IPR023005">
    <property type="entry name" value="Nucleoside_diP_kinase_AS"/>
</dbReference>
<dbReference type="NCBIfam" id="NF001908">
    <property type="entry name" value="PRK00668.1"/>
    <property type="match status" value="1"/>
</dbReference>
<dbReference type="PANTHER" id="PTHR46161">
    <property type="entry name" value="NUCLEOSIDE DIPHOSPHATE KINASE"/>
    <property type="match status" value="1"/>
</dbReference>
<dbReference type="PANTHER" id="PTHR46161:SF3">
    <property type="entry name" value="NUCLEOSIDE DIPHOSPHATE KINASE DDB_G0292928-RELATED"/>
    <property type="match status" value="1"/>
</dbReference>
<dbReference type="Pfam" id="PF00334">
    <property type="entry name" value="NDK"/>
    <property type="match status" value="1"/>
</dbReference>
<dbReference type="PRINTS" id="PR01243">
    <property type="entry name" value="NUCDPKINASE"/>
</dbReference>
<dbReference type="SMART" id="SM00562">
    <property type="entry name" value="NDK"/>
    <property type="match status" value="1"/>
</dbReference>
<dbReference type="SUPFAM" id="SSF54919">
    <property type="entry name" value="Nucleoside diphosphate kinase, NDK"/>
    <property type="match status" value="1"/>
</dbReference>
<dbReference type="PROSITE" id="PS00469">
    <property type="entry name" value="NDPK"/>
    <property type="match status" value="1"/>
</dbReference>
<dbReference type="PROSITE" id="PS51374">
    <property type="entry name" value="NDPK_LIKE"/>
    <property type="match status" value="1"/>
</dbReference>
<evidence type="ECO:0000255" key="1">
    <source>
        <dbReference type="HAMAP-Rule" id="MF_00451"/>
    </source>
</evidence>
<proteinExistence type="inferred from homology"/>
<feature type="chain" id="PRO_1000026230" description="Nucleoside diphosphate kinase">
    <location>
        <begin position="1"/>
        <end position="139"/>
    </location>
</feature>
<feature type="active site" description="Pros-phosphohistidine intermediate" evidence="1">
    <location>
        <position position="116"/>
    </location>
</feature>
<feature type="binding site" evidence="1">
    <location>
        <position position="10"/>
    </location>
    <ligand>
        <name>ATP</name>
        <dbReference type="ChEBI" id="CHEBI:30616"/>
    </ligand>
</feature>
<feature type="binding site" evidence="1">
    <location>
        <position position="58"/>
    </location>
    <ligand>
        <name>ATP</name>
        <dbReference type="ChEBI" id="CHEBI:30616"/>
    </ligand>
</feature>
<feature type="binding site" evidence="1">
    <location>
        <position position="86"/>
    </location>
    <ligand>
        <name>ATP</name>
        <dbReference type="ChEBI" id="CHEBI:30616"/>
    </ligand>
</feature>
<feature type="binding site" evidence="1">
    <location>
        <position position="92"/>
    </location>
    <ligand>
        <name>ATP</name>
        <dbReference type="ChEBI" id="CHEBI:30616"/>
    </ligand>
</feature>
<feature type="binding site" evidence="1">
    <location>
        <position position="103"/>
    </location>
    <ligand>
        <name>ATP</name>
        <dbReference type="ChEBI" id="CHEBI:30616"/>
    </ligand>
</feature>
<feature type="binding site" evidence="1">
    <location>
        <position position="113"/>
    </location>
    <ligand>
        <name>ATP</name>
        <dbReference type="ChEBI" id="CHEBI:30616"/>
    </ligand>
</feature>
<keyword id="KW-0067">ATP-binding</keyword>
<keyword id="KW-0963">Cytoplasm</keyword>
<keyword id="KW-0418">Kinase</keyword>
<keyword id="KW-0460">Magnesium</keyword>
<keyword id="KW-0479">Metal-binding</keyword>
<keyword id="KW-0546">Nucleotide metabolism</keyword>
<keyword id="KW-0547">Nucleotide-binding</keyword>
<keyword id="KW-0597">Phosphoprotein</keyword>
<keyword id="KW-0808">Transferase</keyword>
<comment type="function">
    <text evidence="1">Major role in the synthesis of nucleoside triphosphates other than ATP. The ATP gamma phosphate is transferred to the NDP beta phosphate via a ping-pong mechanism, using a phosphorylated active-site intermediate.</text>
</comment>
<comment type="catalytic activity">
    <reaction evidence="1">
        <text>a 2'-deoxyribonucleoside 5'-diphosphate + ATP = a 2'-deoxyribonucleoside 5'-triphosphate + ADP</text>
        <dbReference type="Rhea" id="RHEA:44640"/>
        <dbReference type="ChEBI" id="CHEBI:30616"/>
        <dbReference type="ChEBI" id="CHEBI:61560"/>
        <dbReference type="ChEBI" id="CHEBI:73316"/>
        <dbReference type="ChEBI" id="CHEBI:456216"/>
        <dbReference type="EC" id="2.7.4.6"/>
    </reaction>
</comment>
<comment type="catalytic activity">
    <reaction evidence="1">
        <text>a ribonucleoside 5'-diphosphate + ATP = a ribonucleoside 5'-triphosphate + ADP</text>
        <dbReference type="Rhea" id="RHEA:18113"/>
        <dbReference type="ChEBI" id="CHEBI:30616"/>
        <dbReference type="ChEBI" id="CHEBI:57930"/>
        <dbReference type="ChEBI" id="CHEBI:61557"/>
        <dbReference type="ChEBI" id="CHEBI:456216"/>
        <dbReference type="EC" id="2.7.4.6"/>
    </reaction>
</comment>
<comment type="cofactor">
    <cofactor evidence="1">
        <name>Mg(2+)</name>
        <dbReference type="ChEBI" id="CHEBI:18420"/>
    </cofactor>
</comment>
<comment type="subunit">
    <text evidence="1">Homotetramer.</text>
</comment>
<comment type="subcellular location">
    <subcellularLocation>
        <location evidence="1">Cytoplasm</location>
    </subcellularLocation>
</comment>
<comment type="similarity">
    <text evidence="1">Belongs to the NDK family.</text>
</comment>
<reference key="1">
    <citation type="journal article" date="2009" name="Environ. Microbiol.">
        <title>Contribution of mobile genetic elements to Desulfovibrio vulgaris genome plasticity.</title>
        <authorList>
            <person name="Walker C.B."/>
            <person name="Stolyar S."/>
            <person name="Chivian D."/>
            <person name="Pinel N."/>
            <person name="Gabster J.A."/>
            <person name="Dehal P.S."/>
            <person name="He Z."/>
            <person name="Yang Z.K."/>
            <person name="Yen H.C."/>
            <person name="Zhou J."/>
            <person name="Wall J.D."/>
            <person name="Hazen T.C."/>
            <person name="Arkin A.P."/>
            <person name="Stahl D.A."/>
        </authorList>
    </citation>
    <scope>NUCLEOTIDE SEQUENCE [LARGE SCALE GENOMIC DNA]</scope>
    <source>
        <strain>DP4</strain>
    </source>
</reference>